<name>KC1AL_HUMAN</name>
<organism>
    <name type="scientific">Homo sapiens</name>
    <name type="common">Human</name>
    <dbReference type="NCBI Taxonomy" id="9606"/>
    <lineage>
        <taxon>Eukaryota</taxon>
        <taxon>Metazoa</taxon>
        <taxon>Chordata</taxon>
        <taxon>Craniata</taxon>
        <taxon>Vertebrata</taxon>
        <taxon>Euteleostomi</taxon>
        <taxon>Mammalia</taxon>
        <taxon>Eutheria</taxon>
        <taxon>Euarchontoglires</taxon>
        <taxon>Primates</taxon>
        <taxon>Haplorrhini</taxon>
        <taxon>Catarrhini</taxon>
        <taxon>Hominidae</taxon>
        <taxon>Homo</taxon>
    </lineage>
</organism>
<sequence length="337" mass="39086">MTNNSGSKAELVVGGKYKLVRKIGSGSFGDVYLGITTTNGEDVAVKLESQKVKHPQLLYESKLYTILQGGVGIPHMHWYGQEKDNNVLVMDLLGPSLEDLFNFCSRRFTMKTVLMLADQMISRIEYVHTKNFLHRDIKPDNFLMGTGRHCNKLFLIDFGLAKKYRDNRTRQHIPYREDKHLIGTVRYASINAHLGIEQSRRDDMESLGYVFMYFNRTSLPWQGLRAMTKKQKYEKISEKKMSTPVEVLCKGFPAEFAMYLNYCRGLRFEEVPDYMYLRQLFRILFRTLNHQYDYTFDWTMLKQKAAQQAASSSGQGQQAQTQTGKQTEKNKNNVKDN</sequence>
<protein>
    <recommendedName>
        <fullName>Casein kinase I isoform alpha-like</fullName>
        <shortName>CKI-alpha-like</shortName>
        <ecNumber>2.7.11.1</ecNumber>
    </recommendedName>
    <alternativeName>
        <fullName>CK1</fullName>
    </alternativeName>
</protein>
<proteinExistence type="evidence at protein level"/>
<gene>
    <name type="primary">CSNK1A1L</name>
</gene>
<accession>Q8N752</accession>
<accession>Q5T2N2</accession>
<feature type="chain" id="PRO_0000192830" description="Casein kinase I isoform alpha-like">
    <location>
        <begin position="1"/>
        <end position="337"/>
    </location>
</feature>
<feature type="domain" description="Protein kinase" evidence="3">
    <location>
        <begin position="17"/>
        <end position="285"/>
    </location>
</feature>
<feature type="region of interest" description="Disordered" evidence="5">
    <location>
        <begin position="309"/>
        <end position="337"/>
    </location>
</feature>
<feature type="compositionally biased region" description="Low complexity" evidence="5">
    <location>
        <begin position="309"/>
        <end position="325"/>
    </location>
</feature>
<feature type="compositionally biased region" description="Basic and acidic residues" evidence="5">
    <location>
        <begin position="326"/>
        <end position="337"/>
    </location>
</feature>
<feature type="active site" description="Proton acceptor" evidence="3 4">
    <location>
        <position position="136"/>
    </location>
</feature>
<feature type="binding site" evidence="3">
    <location>
        <begin position="23"/>
        <end position="31"/>
    </location>
    <ligand>
        <name>ATP</name>
        <dbReference type="ChEBI" id="CHEBI:30616"/>
    </ligand>
</feature>
<feature type="binding site" evidence="3">
    <location>
        <position position="46"/>
    </location>
    <ligand>
        <name>ATP</name>
        <dbReference type="ChEBI" id="CHEBI:30616"/>
    </ligand>
</feature>
<feature type="modified residue" description="N6-acetyllysine" evidence="2">
    <location>
        <position position="8"/>
    </location>
</feature>
<feature type="sequence variant" id="VAR_042074" description="In dbSNP:rs56224973." evidence="8">
    <original>S</original>
    <variation>G</variation>
    <location>
        <position position="5"/>
    </location>
</feature>
<feature type="sequence variant" id="VAR_036450" description="In a colorectal cancer sample; somatic mutation; dbSNP:rs373362769." evidence="7">
    <original>R</original>
    <variation>Q</variation>
    <location>
        <position position="21"/>
    </location>
</feature>
<feature type="sequence variant" id="VAR_042075" description="In dbSNP:rs56158728." evidence="8">
    <original>R</original>
    <variation>W</variation>
    <location>
        <position position="21"/>
    </location>
</feature>
<feature type="sequence variant" id="VAR_042076" description="In dbSNP:rs9576175." evidence="6">
    <original>D</original>
    <variation>E</variation>
    <location>
        <position position="42"/>
    </location>
</feature>
<feature type="sequence variant" id="VAR_034047" description="In dbSNP:rs17773251." evidence="8">
    <original>R</original>
    <variation>S</variation>
    <location>
        <position position="170"/>
    </location>
</feature>
<feature type="sequence variant" id="VAR_042077" description="In dbSNP:rs17054882." evidence="8">
    <original>E</original>
    <variation>K</variation>
    <location>
        <position position="177"/>
    </location>
</feature>
<feature type="sequence variant" id="VAR_042078" description="In dbSNP:rs56252856." evidence="8">
    <original>P</original>
    <variation>L</variation>
    <location>
        <position position="220"/>
    </location>
</feature>
<feature type="sequence variant" id="VAR_042079" description="In dbSNP:rs56252523." evidence="8">
    <original>K</original>
    <variation>N</variation>
    <location>
        <position position="230"/>
    </location>
</feature>
<feature type="sequence variant" id="VAR_042080" description="In dbSNP:rs55895045." evidence="8">
    <original>A</original>
    <variation>T</variation>
    <location>
        <position position="257"/>
    </location>
</feature>
<feature type="sequence conflict" description="In Ref. 3; AAH28723." evidence="10" ref="3">
    <original>R</original>
    <variation>K</variation>
    <location>
        <position position="225"/>
    </location>
</feature>
<evidence type="ECO:0000250" key="1"/>
<evidence type="ECO:0000250" key="2">
    <source>
        <dbReference type="UniProtKB" id="P48729"/>
    </source>
</evidence>
<evidence type="ECO:0000255" key="3">
    <source>
        <dbReference type="PROSITE-ProRule" id="PRU00159"/>
    </source>
</evidence>
<evidence type="ECO:0000255" key="4">
    <source>
        <dbReference type="PROSITE-ProRule" id="PRU10027"/>
    </source>
</evidence>
<evidence type="ECO:0000256" key="5">
    <source>
        <dbReference type="SAM" id="MobiDB-lite"/>
    </source>
</evidence>
<evidence type="ECO:0000269" key="6">
    <source>
    </source>
</evidence>
<evidence type="ECO:0000269" key="7">
    <source>
    </source>
</evidence>
<evidence type="ECO:0000269" key="8">
    <source>
    </source>
</evidence>
<evidence type="ECO:0000269" key="9">
    <source>
    </source>
</evidence>
<evidence type="ECO:0000305" key="10"/>
<dbReference type="EC" id="2.7.11.1"/>
<dbReference type="EMBL" id="AL391383">
    <property type="status" value="NOT_ANNOTATED_CDS"/>
    <property type="molecule type" value="Genomic_DNA"/>
</dbReference>
<dbReference type="EMBL" id="CH471075">
    <property type="protein sequence ID" value="EAX08587.1"/>
    <property type="molecule type" value="Genomic_DNA"/>
</dbReference>
<dbReference type="EMBL" id="BC028723">
    <property type="protein sequence ID" value="AAH28723.1"/>
    <property type="molecule type" value="mRNA"/>
</dbReference>
<dbReference type="CCDS" id="CCDS9363.1"/>
<dbReference type="RefSeq" id="NP_660204.2">
    <property type="nucleotide sequence ID" value="NM_145203.6"/>
</dbReference>
<dbReference type="SMR" id="Q8N752"/>
<dbReference type="BioGRID" id="125755">
    <property type="interactions" value="69"/>
</dbReference>
<dbReference type="FunCoup" id="Q8N752">
    <property type="interactions" value="1015"/>
</dbReference>
<dbReference type="IntAct" id="Q8N752">
    <property type="interactions" value="34"/>
</dbReference>
<dbReference type="MINT" id="Q8N752"/>
<dbReference type="STRING" id="9606.ENSP00000369126"/>
<dbReference type="BindingDB" id="Q8N752"/>
<dbReference type="ChEMBL" id="CHEMBL5520"/>
<dbReference type="DrugCentral" id="Q8N752"/>
<dbReference type="iPTMnet" id="Q8N752"/>
<dbReference type="PhosphoSitePlus" id="Q8N752"/>
<dbReference type="SwissPalm" id="Q8N752"/>
<dbReference type="BioMuta" id="CSNK1A1L"/>
<dbReference type="DMDM" id="212286065"/>
<dbReference type="jPOST" id="Q8N752"/>
<dbReference type="MassIVE" id="Q8N752"/>
<dbReference type="PaxDb" id="9606-ENSP00000369126"/>
<dbReference type="PeptideAtlas" id="Q8N752"/>
<dbReference type="ProteomicsDB" id="72263"/>
<dbReference type="Pumba" id="Q8N752"/>
<dbReference type="Antibodypedia" id="42131">
    <property type="antibodies" value="178 antibodies from 26 providers"/>
</dbReference>
<dbReference type="DNASU" id="122011"/>
<dbReference type="Ensembl" id="ENST00000379800.4">
    <property type="protein sequence ID" value="ENSP00000369126.3"/>
    <property type="gene ID" value="ENSG00000180138.7"/>
</dbReference>
<dbReference type="GeneID" id="122011"/>
<dbReference type="KEGG" id="hsa:122011"/>
<dbReference type="MANE-Select" id="ENST00000379800.4">
    <property type="protein sequence ID" value="ENSP00000369126.3"/>
    <property type="RefSeq nucleotide sequence ID" value="NM_145203.6"/>
    <property type="RefSeq protein sequence ID" value="NP_660204.2"/>
</dbReference>
<dbReference type="UCSC" id="uc001uwm.2">
    <property type="organism name" value="human"/>
</dbReference>
<dbReference type="AGR" id="HGNC:20289"/>
<dbReference type="CTD" id="122011"/>
<dbReference type="DisGeNET" id="122011"/>
<dbReference type="GeneCards" id="CSNK1A1L"/>
<dbReference type="HGNC" id="HGNC:20289">
    <property type="gene designation" value="CSNK1A1L"/>
</dbReference>
<dbReference type="HPA" id="ENSG00000180138">
    <property type="expression patterns" value="Tissue enriched (testis)"/>
</dbReference>
<dbReference type="neXtProt" id="NX_Q8N752"/>
<dbReference type="OpenTargets" id="ENSG00000180138"/>
<dbReference type="PharmGKB" id="PA134917108"/>
<dbReference type="VEuPathDB" id="HostDB:ENSG00000180138"/>
<dbReference type="eggNOG" id="KOG1163">
    <property type="taxonomic scope" value="Eukaryota"/>
</dbReference>
<dbReference type="GeneTree" id="ENSGT00940000164967"/>
<dbReference type="HOGENOM" id="CLU_019279_2_7_1"/>
<dbReference type="InParanoid" id="Q8N752"/>
<dbReference type="OMA" id="IMTQPLH"/>
<dbReference type="OrthoDB" id="5800476at2759"/>
<dbReference type="PAN-GO" id="Q8N752">
    <property type="GO annotations" value="6 GO annotations based on evolutionary models"/>
</dbReference>
<dbReference type="PhylomeDB" id="Q8N752"/>
<dbReference type="TreeFam" id="TF354246"/>
<dbReference type="PathwayCommons" id="Q8N752"/>
<dbReference type="SignaLink" id="Q8N752"/>
<dbReference type="SIGNOR" id="Q8N752"/>
<dbReference type="BioGRID-ORCS" id="122011">
    <property type="hits" value="7 hits in 1147 CRISPR screens"/>
</dbReference>
<dbReference type="GenomeRNAi" id="122011"/>
<dbReference type="Pharos" id="Q8N752">
    <property type="development level" value="Tdark"/>
</dbReference>
<dbReference type="PRO" id="PR:Q8N752"/>
<dbReference type="Proteomes" id="UP000005640">
    <property type="component" value="Chromosome 13"/>
</dbReference>
<dbReference type="RNAct" id="Q8N752">
    <property type="molecule type" value="protein"/>
</dbReference>
<dbReference type="Bgee" id="ENSG00000180138">
    <property type="expression patterns" value="Expressed in primordial germ cell in gonad and 13 other cell types or tissues"/>
</dbReference>
<dbReference type="GO" id="GO:0005737">
    <property type="term" value="C:cytoplasm"/>
    <property type="evidence" value="ECO:0000318"/>
    <property type="project" value="GO_Central"/>
</dbReference>
<dbReference type="GO" id="GO:0005634">
    <property type="term" value="C:nucleus"/>
    <property type="evidence" value="ECO:0000318"/>
    <property type="project" value="GO_Central"/>
</dbReference>
<dbReference type="GO" id="GO:0005524">
    <property type="term" value="F:ATP binding"/>
    <property type="evidence" value="ECO:0007669"/>
    <property type="project" value="UniProtKB-KW"/>
</dbReference>
<dbReference type="GO" id="GO:0106310">
    <property type="term" value="F:protein serine kinase activity"/>
    <property type="evidence" value="ECO:0007669"/>
    <property type="project" value="RHEA"/>
</dbReference>
<dbReference type="GO" id="GO:0004674">
    <property type="term" value="F:protein serine/threonine kinase activity"/>
    <property type="evidence" value="ECO:0000318"/>
    <property type="project" value="GO_Central"/>
</dbReference>
<dbReference type="GO" id="GO:0090090">
    <property type="term" value="P:negative regulation of canonical Wnt signaling pathway"/>
    <property type="evidence" value="ECO:0000318"/>
    <property type="project" value="GO_Central"/>
</dbReference>
<dbReference type="GO" id="GO:0007165">
    <property type="term" value="P:signal transduction"/>
    <property type="evidence" value="ECO:0000318"/>
    <property type="project" value="GO_Central"/>
</dbReference>
<dbReference type="GO" id="GO:0016055">
    <property type="term" value="P:Wnt signaling pathway"/>
    <property type="evidence" value="ECO:0007669"/>
    <property type="project" value="UniProtKB-KW"/>
</dbReference>
<dbReference type="CDD" id="cd14128">
    <property type="entry name" value="STKc_CK1_alpha"/>
    <property type="match status" value="1"/>
</dbReference>
<dbReference type="FunFam" id="1.10.510.10:FF:000120">
    <property type="entry name" value="Casein kinase I isoform alpha"/>
    <property type="match status" value="1"/>
</dbReference>
<dbReference type="FunFam" id="3.30.200.20:FF:001135">
    <property type="entry name" value="Casein kinase I isoform alpha"/>
    <property type="match status" value="1"/>
</dbReference>
<dbReference type="Gene3D" id="1.10.510.10">
    <property type="entry name" value="Transferase(Phosphotransferase) domain 1"/>
    <property type="match status" value="1"/>
</dbReference>
<dbReference type="InterPro" id="IPR050235">
    <property type="entry name" value="CK1_Ser-Thr_kinase"/>
</dbReference>
<dbReference type="InterPro" id="IPR011009">
    <property type="entry name" value="Kinase-like_dom_sf"/>
</dbReference>
<dbReference type="InterPro" id="IPR000719">
    <property type="entry name" value="Prot_kinase_dom"/>
</dbReference>
<dbReference type="InterPro" id="IPR017441">
    <property type="entry name" value="Protein_kinase_ATP_BS"/>
</dbReference>
<dbReference type="InterPro" id="IPR008271">
    <property type="entry name" value="Ser/Thr_kinase_AS"/>
</dbReference>
<dbReference type="PANTHER" id="PTHR11909">
    <property type="entry name" value="CASEIN KINASE-RELATED"/>
    <property type="match status" value="1"/>
</dbReference>
<dbReference type="Pfam" id="PF00069">
    <property type="entry name" value="Pkinase"/>
    <property type="match status" value="1"/>
</dbReference>
<dbReference type="SMART" id="SM00220">
    <property type="entry name" value="S_TKc"/>
    <property type="match status" value="1"/>
</dbReference>
<dbReference type="SUPFAM" id="SSF56112">
    <property type="entry name" value="Protein kinase-like (PK-like)"/>
    <property type="match status" value="1"/>
</dbReference>
<dbReference type="PROSITE" id="PS00107">
    <property type="entry name" value="PROTEIN_KINASE_ATP"/>
    <property type="match status" value="1"/>
</dbReference>
<dbReference type="PROSITE" id="PS50011">
    <property type="entry name" value="PROTEIN_KINASE_DOM"/>
    <property type="match status" value="1"/>
</dbReference>
<dbReference type="PROSITE" id="PS00108">
    <property type="entry name" value="PROTEIN_KINASE_ST"/>
    <property type="match status" value="1"/>
</dbReference>
<comment type="function">
    <text evidence="1">Casein kinases are operationally defined by their preferential utilization of acidic proteins such as caseins as substrates. It can phosphorylate a large number of proteins. Participates in Wnt signaling (By similarity).</text>
</comment>
<comment type="catalytic activity">
    <reaction>
        <text>L-seryl-[protein] + ATP = O-phospho-L-seryl-[protein] + ADP + H(+)</text>
        <dbReference type="Rhea" id="RHEA:17989"/>
        <dbReference type="Rhea" id="RHEA-COMP:9863"/>
        <dbReference type="Rhea" id="RHEA-COMP:11604"/>
        <dbReference type="ChEBI" id="CHEBI:15378"/>
        <dbReference type="ChEBI" id="CHEBI:29999"/>
        <dbReference type="ChEBI" id="CHEBI:30616"/>
        <dbReference type="ChEBI" id="CHEBI:83421"/>
        <dbReference type="ChEBI" id="CHEBI:456216"/>
        <dbReference type="EC" id="2.7.11.1"/>
    </reaction>
</comment>
<comment type="catalytic activity">
    <reaction>
        <text>L-threonyl-[protein] + ATP = O-phospho-L-threonyl-[protein] + ADP + H(+)</text>
        <dbReference type="Rhea" id="RHEA:46608"/>
        <dbReference type="Rhea" id="RHEA-COMP:11060"/>
        <dbReference type="Rhea" id="RHEA-COMP:11605"/>
        <dbReference type="ChEBI" id="CHEBI:15378"/>
        <dbReference type="ChEBI" id="CHEBI:30013"/>
        <dbReference type="ChEBI" id="CHEBI:30616"/>
        <dbReference type="ChEBI" id="CHEBI:61977"/>
        <dbReference type="ChEBI" id="CHEBI:456216"/>
        <dbReference type="EC" id="2.7.11.1"/>
    </reaction>
</comment>
<comment type="subunit">
    <text evidence="9">Interacts with FAM83A, FAM83B, FAM83C, FAM83D, FAM83E, FAM83F, FAM83G and FAM83H (via DUF1669).</text>
</comment>
<comment type="subcellular location">
    <subcellularLocation>
        <location evidence="1">Cytoplasm</location>
    </subcellularLocation>
</comment>
<comment type="similarity">
    <text evidence="10">Belongs to the protein kinase superfamily. CK1 Ser/Thr protein kinase family. Casein kinase I subfamily.</text>
</comment>
<keyword id="KW-0007">Acetylation</keyword>
<keyword id="KW-0067">ATP-binding</keyword>
<keyword id="KW-0963">Cytoplasm</keyword>
<keyword id="KW-0418">Kinase</keyword>
<keyword id="KW-0547">Nucleotide-binding</keyword>
<keyword id="KW-1267">Proteomics identification</keyword>
<keyword id="KW-1185">Reference proteome</keyword>
<keyword id="KW-0723">Serine/threonine-protein kinase</keyword>
<keyword id="KW-0808">Transferase</keyword>
<keyword id="KW-0879">Wnt signaling pathway</keyword>
<reference key="1">
    <citation type="journal article" date="2004" name="Nature">
        <title>The DNA sequence and analysis of human chromosome 13.</title>
        <authorList>
            <person name="Dunham A."/>
            <person name="Matthews L.H."/>
            <person name="Burton J."/>
            <person name="Ashurst J.L."/>
            <person name="Howe K.L."/>
            <person name="Ashcroft K.J."/>
            <person name="Beare D.M."/>
            <person name="Burford D.C."/>
            <person name="Hunt S.E."/>
            <person name="Griffiths-Jones S."/>
            <person name="Jones M.C."/>
            <person name="Keenan S.J."/>
            <person name="Oliver K."/>
            <person name="Scott C.E."/>
            <person name="Ainscough R."/>
            <person name="Almeida J.P."/>
            <person name="Ambrose K.D."/>
            <person name="Andrews D.T."/>
            <person name="Ashwell R.I.S."/>
            <person name="Babbage A.K."/>
            <person name="Bagguley C.L."/>
            <person name="Bailey J."/>
            <person name="Bannerjee R."/>
            <person name="Barlow K.F."/>
            <person name="Bates K."/>
            <person name="Beasley H."/>
            <person name="Bird C.P."/>
            <person name="Bray-Allen S."/>
            <person name="Brown A.J."/>
            <person name="Brown J.Y."/>
            <person name="Burrill W."/>
            <person name="Carder C."/>
            <person name="Carter N.P."/>
            <person name="Chapman J.C."/>
            <person name="Clamp M.E."/>
            <person name="Clark S.Y."/>
            <person name="Clarke G."/>
            <person name="Clee C.M."/>
            <person name="Clegg S.C."/>
            <person name="Cobley V."/>
            <person name="Collins J.E."/>
            <person name="Corby N."/>
            <person name="Coville G.J."/>
            <person name="Deloukas P."/>
            <person name="Dhami P."/>
            <person name="Dunham I."/>
            <person name="Dunn M."/>
            <person name="Earthrowl M.E."/>
            <person name="Ellington A.G."/>
            <person name="Faulkner L."/>
            <person name="Frankish A.G."/>
            <person name="Frankland J."/>
            <person name="French L."/>
            <person name="Garner P."/>
            <person name="Garnett J."/>
            <person name="Gilbert J.G.R."/>
            <person name="Gilson C.J."/>
            <person name="Ghori J."/>
            <person name="Grafham D.V."/>
            <person name="Gribble S.M."/>
            <person name="Griffiths C."/>
            <person name="Hall R.E."/>
            <person name="Hammond S."/>
            <person name="Harley J.L."/>
            <person name="Hart E.A."/>
            <person name="Heath P.D."/>
            <person name="Howden P.J."/>
            <person name="Huckle E.J."/>
            <person name="Hunt P.J."/>
            <person name="Hunt A.R."/>
            <person name="Johnson C."/>
            <person name="Johnson D."/>
            <person name="Kay M."/>
            <person name="Kimberley A.M."/>
            <person name="King A."/>
            <person name="Laird G.K."/>
            <person name="Langford C.J."/>
            <person name="Lawlor S."/>
            <person name="Leongamornlert D.A."/>
            <person name="Lloyd D.M."/>
            <person name="Lloyd C."/>
            <person name="Loveland J.E."/>
            <person name="Lovell J."/>
            <person name="Martin S."/>
            <person name="Mashreghi-Mohammadi M."/>
            <person name="McLaren S.J."/>
            <person name="McMurray A."/>
            <person name="Milne S."/>
            <person name="Moore M.J.F."/>
            <person name="Nickerson T."/>
            <person name="Palmer S.A."/>
            <person name="Pearce A.V."/>
            <person name="Peck A.I."/>
            <person name="Pelan S."/>
            <person name="Phillimore B."/>
            <person name="Porter K.M."/>
            <person name="Rice C.M."/>
            <person name="Searle S."/>
            <person name="Sehra H.K."/>
            <person name="Shownkeen R."/>
            <person name="Skuce C.D."/>
            <person name="Smith M."/>
            <person name="Steward C.A."/>
            <person name="Sycamore N."/>
            <person name="Tester J."/>
            <person name="Thomas D.W."/>
            <person name="Tracey A."/>
            <person name="Tromans A."/>
            <person name="Tubby B."/>
            <person name="Wall M."/>
            <person name="Wallis J.M."/>
            <person name="West A.P."/>
            <person name="Whitehead S.L."/>
            <person name="Willey D.L."/>
            <person name="Wilming L."/>
            <person name="Wray P.W."/>
            <person name="Wright M.W."/>
            <person name="Young L."/>
            <person name="Coulson A."/>
            <person name="Durbin R.M."/>
            <person name="Hubbard T."/>
            <person name="Sulston J.E."/>
            <person name="Beck S."/>
            <person name="Bentley D.R."/>
            <person name="Rogers J."/>
            <person name="Ross M.T."/>
        </authorList>
    </citation>
    <scope>NUCLEOTIDE SEQUENCE [LARGE SCALE GENOMIC DNA]</scope>
</reference>
<reference key="2">
    <citation type="submission" date="2005-07" db="EMBL/GenBank/DDBJ databases">
        <authorList>
            <person name="Mural R.J."/>
            <person name="Istrail S."/>
            <person name="Sutton G.G."/>
            <person name="Florea L."/>
            <person name="Halpern A.L."/>
            <person name="Mobarry C.M."/>
            <person name="Lippert R."/>
            <person name="Walenz B."/>
            <person name="Shatkay H."/>
            <person name="Dew I."/>
            <person name="Miller J.R."/>
            <person name="Flanigan M.J."/>
            <person name="Edwards N.J."/>
            <person name="Bolanos R."/>
            <person name="Fasulo D."/>
            <person name="Halldorsson B.V."/>
            <person name="Hannenhalli S."/>
            <person name="Turner R."/>
            <person name="Yooseph S."/>
            <person name="Lu F."/>
            <person name="Nusskern D.R."/>
            <person name="Shue B.C."/>
            <person name="Zheng X.H."/>
            <person name="Zhong F."/>
            <person name="Delcher A.L."/>
            <person name="Huson D.H."/>
            <person name="Kravitz S.A."/>
            <person name="Mouchard L."/>
            <person name="Reinert K."/>
            <person name="Remington K.A."/>
            <person name="Clark A.G."/>
            <person name="Waterman M.S."/>
            <person name="Eichler E.E."/>
            <person name="Adams M.D."/>
            <person name="Hunkapiller M.W."/>
            <person name="Myers E.W."/>
            <person name="Venter J.C."/>
        </authorList>
    </citation>
    <scope>NUCLEOTIDE SEQUENCE [LARGE SCALE GENOMIC DNA]</scope>
</reference>
<reference key="3">
    <citation type="journal article" date="2004" name="Genome Res.">
        <title>The status, quality, and expansion of the NIH full-length cDNA project: the Mammalian Gene Collection (MGC).</title>
        <authorList>
            <consortium name="The MGC Project Team"/>
        </authorList>
    </citation>
    <scope>NUCLEOTIDE SEQUENCE [LARGE SCALE MRNA]</scope>
    <scope>VARIANT GLU-42</scope>
    <source>
        <tissue>Testis</tissue>
    </source>
</reference>
<reference key="4">
    <citation type="journal article" date="2018" name="Sci. Signal.">
        <title>The DUF1669 domain of FAM83 family proteins anchor casein kinase 1 isoforms.</title>
        <authorList>
            <person name="Fulcher L.J."/>
            <person name="Bozatzi P."/>
            <person name="Tachie-Menson T."/>
            <person name="Wu K.Z.L."/>
            <person name="Cummins T.D."/>
            <person name="Bufton J.C."/>
            <person name="Pinkas D.M."/>
            <person name="Dunbar K."/>
            <person name="Shrestha S."/>
            <person name="Wood N.T."/>
            <person name="Weidlich S."/>
            <person name="Macartney T.J."/>
            <person name="Varghese J."/>
            <person name="Gourlay R."/>
            <person name="Campbell D.G."/>
            <person name="Dingwell K.S."/>
            <person name="Smith J.C."/>
            <person name="Bullock A.N."/>
            <person name="Sapkota G.P."/>
        </authorList>
    </citation>
    <scope>INTERACTION WITH FAM83A; FAM83B; FAM83C; FAM83D; FAM83E; FAM83F; FAM83G AND FAM83H</scope>
</reference>
<reference key="5">
    <citation type="journal article" date="2006" name="Science">
        <title>The consensus coding sequences of human breast and colorectal cancers.</title>
        <authorList>
            <person name="Sjoeblom T."/>
            <person name="Jones S."/>
            <person name="Wood L.D."/>
            <person name="Parsons D.W."/>
            <person name="Lin J."/>
            <person name="Barber T.D."/>
            <person name="Mandelker D."/>
            <person name="Leary R.J."/>
            <person name="Ptak J."/>
            <person name="Silliman N."/>
            <person name="Szabo S."/>
            <person name="Buckhaults P."/>
            <person name="Farrell C."/>
            <person name="Meeh P."/>
            <person name="Markowitz S.D."/>
            <person name="Willis J."/>
            <person name="Dawson D."/>
            <person name="Willson J.K.V."/>
            <person name="Gazdar A.F."/>
            <person name="Hartigan J."/>
            <person name="Wu L."/>
            <person name="Liu C."/>
            <person name="Parmigiani G."/>
            <person name="Park B.H."/>
            <person name="Bachman K.E."/>
            <person name="Papadopoulos N."/>
            <person name="Vogelstein B."/>
            <person name="Kinzler K.W."/>
            <person name="Velculescu V.E."/>
        </authorList>
    </citation>
    <scope>VARIANT [LARGE SCALE ANALYSIS] GLN-21</scope>
</reference>
<reference key="6">
    <citation type="journal article" date="2007" name="Nature">
        <title>Patterns of somatic mutation in human cancer genomes.</title>
        <authorList>
            <person name="Greenman C."/>
            <person name="Stephens P."/>
            <person name="Smith R."/>
            <person name="Dalgliesh G.L."/>
            <person name="Hunter C."/>
            <person name="Bignell G."/>
            <person name="Davies H."/>
            <person name="Teague J."/>
            <person name="Butler A."/>
            <person name="Stevens C."/>
            <person name="Edkins S."/>
            <person name="O'Meara S."/>
            <person name="Vastrik I."/>
            <person name="Schmidt E.E."/>
            <person name="Avis T."/>
            <person name="Barthorpe S."/>
            <person name="Bhamra G."/>
            <person name="Buck G."/>
            <person name="Choudhury B."/>
            <person name="Clements J."/>
            <person name="Cole J."/>
            <person name="Dicks E."/>
            <person name="Forbes S."/>
            <person name="Gray K."/>
            <person name="Halliday K."/>
            <person name="Harrison R."/>
            <person name="Hills K."/>
            <person name="Hinton J."/>
            <person name="Jenkinson A."/>
            <person name="Jones D."/>
            <person name="Menzies A."/>
            <person name="Mironenko T."/>
            <person name="Perry J."/>
            <person name="Raine K."/>
            <person name="Richardson D."/>
            <person name="Shepherd R."/>
            <person name="Small A."/>
            <person name="Tofts C."/>
            <person name="Varian J."/>
            <person name="Webb T."/>
            <person name="West S."/>
            <person name="Widaa S."/>
            <person name="Yates A."/>
            <person name="Cahill D.P."/>
            <person name="Louis D.N."/>
            <person name="Goldstraw P."/>
            <person name="Nicholson A.G."/>
            <person name="Brasseur F."/>
            <person name="Looijenga L."/>
            <person name="Weber B.L."/>
            <person name="Chiew Y.-E."/>
            <person name="DeFazio A."/>
            <person name="Greaves M.F."/>
            <person name="Green A.R."/>
            <person name="Campbell P."/>
            <person name="Birney E."/>
            <person name="Easton D.F."/>
            <person name="Chenevix-Trench G."/>
            <person name="Tan M.-H."/>
            <person name="Khoo S.K."/>
            <person name="Teh B.T."/>
            <person name="Yuen S.T."/>
            <person name="Leung S.Y."/>
            <person name="Wooster R."/>
            <person name="Futreal P.A."/>
            <person name="Stratton M.R."/>
        </authorList>
    </citation>
    <scope>VARIANTS [LARGE SCALE ANALYSIS] GLY-5; TRP-21; SER-170; LYS-177; LEU-220; ASN-230 AND THR-257</scope>
</reference>